<organism>
    <name type="scientific">Escherichia coli O81 (strain ED1a)</name>
    <dbReference type="NCBI Taxonomy" id="585397"/>
    <lineage>
        <taxon>Bacteria</taxon>
        <taxon>Pseudomonadati</taxon>
        <taxon>Pseudomonadota</taxon>
        <taxon>Gammaproteobacteria</taxon>
        <taxon>Enterobacterales</taxon>
        <taxon>Enterobacteriaceae</taxon>
        <taxon>Escherichia</taxon>
    </lineage>
</organism>
<protein>
    <recommendedName>
        <fullName evidence="1">Large ribosomal subunit protein bL31</fullName>
    </recommendedName>
    <alternativeName>
        <fullName evidence="2">50S ribosomal protein L31</fullName>
    </alternativeName>
</protein>
<feature type="chain" id="PRO_1000176962" description="Large ribosomal subunit protein bL31">
    <location>
        <begin position="1"/>
        <end position="70"/>
    </location>
</feature>
<feature type="binding site" evidence="1">
    <location>
        <position position="16"/>
    </location>
    <ligand>
        <name>Zn(2+)</name>
        <dbReference type="ChEBI" id="CHEBI:29105"/>
    </ligand>
</feature>
<feature type="binding site" evidence="1">
    <location>
        <position position="18"/>
    </location>
    <ligand>
        <name>Zn(2+)</name>
        <dbReference type="ChEBI" id="CHEBI:29105"/>
    </ligand>
</feature>
<feature type="binding site" evidence="1">
    <location>
        <position position="37"/>
    </location>
    <ligand>
        <name>Zn(2+)</name>
        <dbReference type="ChEBI" id="CHEBI:29105"/>
    </ligand>
</feature>
<feature type="binding site" evidence="1">
    <location>
        <position position="40"/>
    </location>
    <ligand>
        <name>Zn(2+)</name>
        <dbReference type="ChEBI" id="CHEBI:29105"/>
    </ligand>
</feature>
<feature type="modified residue" description="N6-acetyllysine" evidence="1">
    <location>
        <position position="8"/>
    </location>
</feature>
<reference key="1">
    <citation type="journal article" date="2009" name="PLoS Genet.">
        <title>Organised genome dynamics in the Escherichia coli species results in highly diverse adaptive paths.</title>
        <authorList>
            <person name="Touchon M."/>
            <person name="Hoede C."/>
            <person name="Tenaillon O."/>
            <person name="Barbe V."/>
            <person name="Baeriswyl S."/>
            <person name="Bidet P."/>
            <person name="Bingen E."/>
            <person name="Bonacorsi S."/>
            <person name="Bouchier C."/>
            <person name="Bouvet O."/>
            <person name="Calteau A."/>
            <person name="Chiapello H."/>
            <person name="Clermont O."/>
            <person name="Cruveiller S."/>
            <person name="Danchin A."/>
            <person name="Diard M."/>
            <person name="Dossat C."/>
            <person name="Karoui M.E."/>
            <person name="Frapy E."/>
            <person name="Garry L."/>
            <person name="Ghigo J.M."/>
            <person name="Gilles A.M."/>
            <person name="Johnson J."/>
            <person name="Le Bouguenec C."/>
            <person name="Lescat M."/>
            <person name="Mangenot S."/>
            <person name="Martinez-Jehanne V."/>
            <person name="Matic I."/>
            <person name="Nassif X."/>
            <person name="Oztas S."/>
            <person name="Petit M.A."/>
            <person name="Pichon C."/>
            <person name="Rouy Z."/>
            <person name="Ruf C.S."/>
            <person name="Schneider D."/>
            <person name="Tourret J."/>
            <person name="Vacherie B."/>
            <person name="Vallenet D."/>
            <person name="Medigue C."/>
            <person name="Rocha E.P.C."/>
            <person name="Denamur E."/>
        </authorList>
    </citation>
    <scope>NUCLEOTIDE SEQUENCE [LARGE SCALE GENOMIC DNA]</scope>
    <source>
        <strain>ED1a</strain>
    </source>
</reference>
<name>RL31_ECO81</name>
<sequence length="70" mass="7871">MKKDIHPKYEEITASCSCGNVMKIRSTVGHDLNLDVCSKCHPFFTGKQRDVATGGRVDRFNKRFNIPGSK</sequence>
<accession>B7N2S7</accession>
<dbReference type="EMBL" id="CU928162">
    <property type="protein sequence ID" value="CAR10746.2"/>
    <property type="molecule type" value="Genomic_DNA"/>
</dbReference>
<dbReference type="RefSeq" id="WP_000710769.1">
    <property type="nucleotide sequence ID" value="NC_011745.1"/>
</dbReference>
<dbReference type="SMR" id="B7N2S7"/>
<dbReference type="GeneID" id="93777962"/>
<dbReference type="KEGG" id="ecq:ECED1_4638"/>
<dbReference type="HOGENOM" id="CLU_114306_4_3_6"/>
<dbReference type="Proteomes" id="UP000000748">
    <property type="component" value="Chromosome"/>
</dbReference>
<dbReference type="GO" id="GO:1990904">
    <property type="term" value="C:ribonucleoprotein complex"/>
    <property type="evidence" value="ECO:0007669"/>
    <property type="project" value="UniProtKB-KW"/>
</dbReference>
<dbReference type="GO" id="GO:0005840">
    <property type="term" value="C:ribosome"/>
    <property type="evidence" value="ECO:0007669"/>
    <property type="project" value="UniProtKB-KW"/>
</dbReference>
<dbReference type="GO" id="GO:0046872">
    <property type="term" value="F:metal ion binding"/>
    <property type="evidence" value="ECO:0007669"/>
    <property type="project" value="UniProtKB-KW"/>
</dbReference>
<dbReference type="GO" id="GO:0019843">
    <property type="term" value="F:rRNA binding"/>
    <property type="evidence" value="ECO:0007669"/>
    <property type="project" value="UniProtKB-KW"/>
</dbReference>
<dbReference type="GO" id="GO:0003735">
    <property type="term" value="F:structural constituent of ribosome"/>
    <property type="evidence" value="ECO:0007669"/>
    <property type="project" value="InterPro"/>
</dbReference>
<dbReference type="GO" id="GO:0006412">
    <property type="term" value="P:translation"/>
    <property type="evidence" value="ECO:0007669"/>
    <property type="project" value="UniProtKB-UniRule"/>
</dbReference>
<dbReference type="FunFam" id="4.10.830.30:FF:000001">
    <property type="entry name" value="50S ribosomal protein L31"/>
    <property type="match status" value="1"/>
</dbReference>
<dbReference type="Gene3D" id="4.10.830.30">
    <property type="entry name" value="Ribosomal protein L31"/>
    <property type="match status" value="1"/>
</dbReference>
<dbReference type="HAMAP" id="MF_00501">
    <property type="entry name" value="Ribosomal_bL31_1"/>
    <property type="match status" value="1"/>
</dbReference>
<dbReference type="InterPro" id="IPR034704">
    <property type="entry name" value="Ribosomal_bL28/bL31-like_sf"/>
</dbReference>
<dbReference type="InterPro" id="IPR002150">
    <property type="entry name" value="Ribosomal_bL31"/>
</dbReference>
<dbReference type="InterPro" id="IPR027491">
    <property type="entry name" value="Ribosomal_bL31_A"/>
</dbReference>
<dbReference type="InterPro" id="IPR042105">
    <property type="entry name" value="Ribosomal_bL31_sf"/>
</dbReference>
<dbReference type="NCBIfam" id="TIGR00105">
    <property type="entry name" value="L31"/>
    <property type="match status" value="1"/>
</dbReference>
<dbReference type="NCBIfam" id="NF000612">
    <property type="entry name" value="PRK00019.1"/>
    <property type="match status" value="1"/>
</dbReference>
<dbReference type="NCBIfam" id="NF001809">
    <property type="entry name" value="PRK00528.1"/>
    <property type="match status" value="1"/>
</dbReference>
<dbReference type="PANTHER" id="PTHR33280">
    <property type="entry name" value="50S RIBOSOMAL PROTEIN L31, CHLOROPLASTIC"/>
    <property type="match status" value="1"/>
</dbReference>
<dbReference type="PANTHER" id="PTHR33280:SF6">
    <property type="entry name" value="LARGE RIBOSOMAL SUBUNIT PROTEIN BL31A"/>
    <property type="match status" value="1"/>
</dbReference>
<dbReference type="Pfam" id="PF01197">
    <property type="entry name" value="Ribosomal_L31"/>
    <property type="match status" value="1"/>
</dbReference>
<dbReference type="PRINTS" id="PR01249">
    <property type="entry name" value="RIBOSOMALL31"/>
</dbReference>
<dbReference type="SUPFAM" id="SSF143800">
    <property type="entry name" value="L28p-like"/>
    <property type="match status" value="1"/>
</dbReference>
<dbReference type="PROSITE" id="PS01143">
    <property type="entry name" value="RIBOSOMAL_L31"/>
    <property type="match status" value="1"/>
</dbReference>
<comment type="function">
    <text evidence="1">Binds the 23S rRNA.</text>
</comment>
<comment type="cofactor">
    <cofactor evidence="1">
        <name>Zn(2+)</name>
        <dbReference type="ChEBI" id="CHEBI:29105"/>
    </cofactor>
    <text evidence="1">Binds 1 zinc ion per subunit.</text>
</comment>
<comment type="subunit">
    <text evidence="1">Part of the 50S ribosomal subunit.</text>
</comment>
<comment type="similarity">
    <text evidence="1">Belongs to the bacterial ribosomal protein bL31 family. Type A subfamily.</text>
</comment>
<evidence type="ECO:0000255" key="1">
    <source>
        <dbReference type="HAMAP-Rule" id="MF_00501"/>
    </source>
</evidence>
<evidence type="ECO:0000305" key="2"/>
<proteinExistence type="inferred from homology"/>
<gene>
    <name evidence="1" type="primary">rpmE</name>
    <name type="ordered locus">ECED1_4638</name>
</gene>
<keyword id="KW-0007">Acetylation</keyword>
<keyword id="KW-0479">Metal-binding</keyword>
<keyword id="KW-0687">Ribonucleoprotein</keyword>
<keyword id="KW-0689">Ribosomal protein</keyword>
<keyword id="KW-0694">RNA-binding</keyword>
<keyword id="KW-0699">rRNA-binding</keyword>
<keyword id="KW-0862">Zinc</keyword>